<protein>
    <recommendedName>
        <fullName evidence="1">Phenylalanine--tRNA ligase beta subunit</fullName>
        <ecNumber evidence="1">6.1.1.20</ecNumber>
    </recommendedName>
    <alternativeName>
        <fullName evidence="1">Phenylalanyl-tRNA synthetase beta subunit</fullName>
        <shortName evidence="1">PheRS</shortName>
    </alternativeName>
</protein>
<comment type="catalytic activity">
    <reaction evidence="1">
        <text>tRNA(Phe) + L-phenylalanine + ATP = L-phenylalanyl-tRNA(Phe) + AMP + diphosphate + H(+)</text>
        <dbReference type="Rhea" id="RHEA:19413"/>
        <dbReference type="Rhea" id="RHEA-COMP:9668"/>
        <dbReference type="Rhea" id="RHEA-COMP:9699"/>
        <dbReference type="ChEBI" id="CHEBI:15378"/>
        <dbReference type="ChEBI" id="CHEBI:30616"/>
        <dbReference type="ChEBI" id="CHEBI:33019"/>
        <dbReference type="ChEBI" id="CHEBI:58095"/>
        <dbReference type="ChEBI" id="CHEBI:78442"/>
        <dbReference type="ChEBI" id="CHEBI:78531"/>
        <dbReference type="ChEBI" id="CHEBI:456215"/>
        <dbReference type="EC" id="6.1.1.20"/>
    </reaction>
</comment>
<comment type="cofactor">
    <cofactor evidence="1">
        <name>Mg(2+)</name>
        <dbReference type="ChEBI" id="CHEBI:18420"/>
    </cofactor>
    <text evidence="1">Binds 2 magnesium ions per tetramer.</text>
</comment>
<comment type="subunit">
    <text evidence="1">Tetramer of two alpha and two beta subunits.</text>
</comment>
<comment type="subcellular location">
    <subcellularLocation>
        <location evidence="1">Cytoplasm</location>
    </subcellularLocation>
</comment>
<comment type="similarity">
    <text evidence="1">Belongs to the phenylalanyl-tRNA synthetase beta subunit family. Type 1 subfamily.</text>
</comment>
<name>SYFB_HAEDU</name>
<evidence type="ECO:0000255" key="1">
    <source>
        <dbReference type="HAMAP-Rule" id="MF_00283"/>
    </source>
</evidence>
<proteinExistence type="inferred from homology"/>
<accession>Q7VLG3</accession>
<keyword id="KW-0030">Aminoacyl-tRNA synthetase</keyword>
<keyword id="KW-0067">ATP-binding</keyword>
<keyword id="KW-0963">Cytoplasm</keyword>
<keyword id="KW-0436">Ligase</keyword>
<keyword id="KW-0460">Magnesium</keyword>
<keyword id="KW-0479">Metal-binding</keyword>
<keyword id="KW-0547">Nucleotide-binding</keyword>
<keyword id="KW-0648">Protein biosynthesis</keyword>
<keyword id="KW-1185">Reference proteome</keyword>
<keyword id="KW-0694">RNA-binding</keyword>
<keyword id="KW-0820">tRNA-binding</keyword>
<dbReference type="EC" id="6.1.1.20" evidence="1"/>
<dbReference type="EMBL" id="AE017143">
    <property type="protein sequence ID" value="AAP96285.1"/>
    <property type="molecule type" value="Genomic_DNA"/>
</dbReference>
<dbReference type="RefSeq" id="WP_010945330.1">
    <property type="nucleotide sequence ID" value="NC_002940.2"/>
</dbReference>
<dbReference type="SMR" id="Q7VLG3"/>
<dbReference type="STRING" id="233412.HD_1483"/>
<dbReference type="KEGG" id="hdu:HD_1483"/>
<dbReference type="eggNOG" id="COG0072">
    <property type="taxonomic scope" value="Bacteria"/>
</dbReference>
<dbReference type="HOGENOM" id="CLU_016891_0_0_6"/>
<dbReference type="OrthoDB" id="9805455at2"/>
<dbReference type="Proteomes" id="UP000001022">
    <property type="component" value="Chromosome"/>
</dbReference>
<dbReference type="GO" id="GO:0009328">
    <property type="term" value="C:phenylalanine-tRNA ligase complex"/>
    <property type="evidence" value="ECO:0007669"/>
    <property type="project" value="TreeGrafter"/>
</dbReference>
<dbReference type="GO" id="GO:0005524">
    <property type="term" value="F:ATP binding"/>
    <property type="evidence" value="ECO:0007669"/>
    <property type="project" value="UniProtKB-UniRule"/>
</dbReference>
<dbReference type="GO" id="GO:0000287">
    <property type="term" value="F:magnesium ion binding"/>
    <property type="evidence" value="ECO:0007669"/>
    <property type="project" value="UniProtKB-UniRule"/>
</dbReference>
<dbReference type="GO" id="GO:0004826">
    <property type="term" value="F:phenylalanine-tRNA ligase activity"/>
    <property type="evidence" value="ECO:0007669"/>
    <property type="project" value="UniProtKB-UniRule"/>
</dbReference>
<dbReference type="GO" id="GO:0000049">
    <property type="term" value="F:tRNA binding"/>
    <property type="evidence" value="ECO:0007669"/>
    <property type="project" value="UniProtKB-KW"/>
</dbReference>
<dbReference type="GO" id="GO:0006432">
    <property type="term" value="P:phenylalanyl-tRNA aminoacylation"/>
    <property type="evidence" value="ECO:0007669"/>
    <property type="project" value="UniProtKB-UniRule"/>
</dbReference>
<dbReference type="CDD" id="cd00769">
    <property type="entry name" value="PheRS_beta_core"/>
    <property type="match status" value="1"/>
</dbReference>
<dbReference type="CDD" id="cd02796">
    <property type="entry name" value="tRNA_bind_bactPheRS"/>
    <property type="match status" value="1"/>
</dbReference>
<dbReference type="FunFam" id="2.40.50.140:FF:000045">
    <property type="entry name" value="Phenylalanine--tRNA ligase beta subunit"/>
    <property type="match status" value="1"/>
</dbReference>
<dbReference type="FunFam" id="3.30.56.10:FF:000002">
    <property type="entry name" value="Phenylalanine--tRNA ligase beta subunit"/>
    <property type="match status" value="1"/>
</dbReference>
<dbReference type="FunFam" id="3.30.70.380:FF:000001">
    <property type="entry name" value="Phenylalanine--tRNA ligase beta subunit"/>
    <property type="match status" value="1"/>
</dbReference>
<dbReference type="FunFam" id="3.30.930.10:FF:000022">
    <property type="entry name" value="Phenylalanine--tRNA ligase beta subunit"/>
    <property type="match status" value="1"/>
</dbReference>
<dbReference type="FunFam" id="3.50.40.10:FF:000001">
    <property type="entry name" value="Phenylalanine--tRNA ligase beta subunit"/>
    <property type="match status" value="1"/>
</dbReference>
<dbReference type="Gene3D" id="3.30.56.10">
    <property type="match status" value="2"/>
</dbReference>
<dbReference type="Gene3D" id="3.30.930.10">
    <property type="entry name" value="Bira Bifunctional Protein, Domain 2"/>
    <property type="match status" value="1"/>
</dbReference>
<dbReference type="Gene3D" id="3.30.70.380">
    <property type="entry name" value="Ferrodoxin-fold anticodon-binding domain"/>
    <property type="match status" value="1"/>
</dbReference>
<dbReference type="Gene3D" id="2.40.50.140">
    <property type="entry name" value="Nucleic acid-binding proteins"/>
    <property type="match status" value="1"/>
</dbReference>
<dbReference type="Gene3D" id="3.50.40.10">
    <property type="entry name" value="Phenylalanyl-trna Synthetase, Chain B, domain 3"/>
    <property type="match status" value="1"/>
</dbReference>
<dbReference type="HAMAP" id="MF_00283">
    <property type="entry name" value="Phe_tRNA_synth_beta1"/>
    <property type="match status" value="1"/>
</dbReference>
<dbReference type="InterPro" id="IPR045864">
    <property type="entry name" value="aa-tRNA-synth_II/BPL/LPL"/>
</dbReference>
<dbReference type="InterPro" id="IPR005146">
    <property type="entry name" value="B3/B4_tRNA-bd"/>
</dbReference>
<dbReference type="InterPro" id="IPR009061">
    <property type="entry name" value="DNA-bd_dom_put_sf"/>
</dbReference>
<dbReference type="InterPro" id="IPR005121">
    <property type="entry name" value="Fdx_antiC-bd"/>
</dbReference>
<dbReference type="InterPro" id="IPR036690">
    <property type="entry name" value="Fdx_antiC-bd_sf"/>
</dbReference>
<dbReference type="InterPro" id="IPR012340">
    <property type="entry name" value="NA-bd_OB-fold"/>
</dbReference>
<dbReference type="InterPro" id="IPR045060">
    <property type="entry name" value="Phe-tRNA-ligase_IIc_bsu"/>
</dbReference>
<dbReference type="InterPro" id="IPR004532">
    <property type="entry name" value="Phe-tRNA-ligase_IIc_bsu_bact"/>
</dbReference>
<dbReference type="InterPro" id="IPR020825">
    <property type="entry name" value="Phe-tRNA_synthase-like_B3/B4"/>
</dbReference>
<dbReference type="InterPro" id="IPR041616">
    <property type="entry name" value="PheRS_beta_core"/>
</dbReference>
<dbReference type="InterPro" id="IPR002547">
    <property type="entry name" value="tRNA-bd_dom"/>
</dbReference>
<dbReference type="InterPro" id="IPR033714">
    <property type="entry name" value="tRNA_bind_bactPheRS"/>
</dbReference>
<dbReference type="InterPro" id="IPR005147">
    <property type="entry name" value="tRNA_synthase_B5-dom"/>
</dbReference>
<dbReference type="NCBIfam" id="TIGR00472">
    <property type="entry name" value="pheT_bact"/>
    <property type="match status" value="1"/>
</dbReference>
<dbReference type="NCBIfam" id="NF045760">
    <property type="entry name" value="YtpR"/>
    <property type="match status" value="1"/>
</dbReference>
<dbReference type="PANTHER" id="PTHR10947:SF0">
    <property type="entry name" value="PHENYLALANINE--TRNA LIGASE BETA SUBUNIT"/>
    <property type="match status" value="1"/>
</dbReference>
<dbReference type="PANTHER" id="PTHR10947">
    <property type="entry name" value="PHENYLALANYL-TRNA SYNTHETASE BETA CHAIN AND LEUCINE-RICH REPEAT-CONTAINING PROTEIN 47"/>
    <property type="match status" value="1"/>
</dbReference>
<dbReference type="Pfam" id="PF03483">
    <property type="entry name" value="B3_4"/>
    <property type="match status" value="1"/>
</dbReference>
<dbReference type="Pfam" id="PF03484">
    <property type="entry name" value="B5"/>
    <property type="match status" value="1"/>
</dbReference>
<dbReference type="Pfam" id="PF03147">
    <property type="entry name" value="FDX-ACB"/>
    <property type="match status" value="1"/>
</dbReference>
<dbReference type="Pfam" id="PF01588">
    <property type="entry name" value="tRNA_bind"/>
    <property type="match status" value="1"/>
</dbReference>
<dbReference type="Pfam" id="PF17759">
    <property type="entry name" value="tRNA_synthFbeta"/>
    <property type="match status" value="1"/>
</dbReference>
<dbReference type="SMART" id="SM00873">
    <property type="entry name" value="B3_4"/>
    <property type="match status" value="1"/>
</dbReference>
<dbReference type="SMART" id="SM00874">
    <property type="entry name" value="B5"/>
    <property type="match status" value="1"/>
</dbReference>
<dbReference type="SMART" id="SM00896">
    <property type="entry name" value="FDX-ACB"/>
    <property type="match status" value="1"/>
</dbReference>
<dbReference type="SUPFAM" id="SSF54991">
    <property type="entry name" value="Anticodon-binding domain of PheRS"/>
    <property type="match status" value="1"/>
</dbReference>
<dbReference type="SUPFAM" id="SSF55681">
    <property type="entry name" value="Class II aaRS and biotin synthetases"/>
    <property type="match status" value="1"/>
</dbReference>
<dbReference type="SUPFAM" id="SSF50249">
    <property type="entry name" value="Nucleic acid-binding proteins"/>
    <property type="match status" value="1"/>
</dbReference>
<dbReference type="SUPFAM" id="SSF56037">
    <property type="entry name" value="PheT/TilS domain"/>
    <property type="match status" value="1"/>
</dbReference>
<dbReference type="SUPFAM" id="SSF46955">
    <property type="entry name" value="Putative DNA-binding domain"/>
    <property type="match status" value="1"/>
</dbReference>
<dbReference type="PROSITE" id="PS51483">
    <property type="entry name" value="B5"/>
    <property type="match status" value="1"/>
</dbReference>
<dbReference type="PROSITE" id="PS51447">
    <property type="entry name" value="FDX_ACB"/>
    <property type="match status" value="1"/>
</dbReference>
<dbReference type="PROSITE" id="PS50886">
    <property type="entry name" value="TRBD"/>
    <property type="match status" value="1"/>
</dbReference>
<organism>
    <name type="scientific">Haemophilus ducreyi (strain 35000HP / ATCC 700724)</name>
    <dbReference type="NCBI Taxonomy" id="233412"/>
    <lineage>
        <taxon>Bacteria</taxon>
        <taxon>Pseudomonadati</taxon>
        <taxon>Pseudomonadota</taxon>
        <taxon>Gammaproteobacteria</taxon>
        <taxon>Pasteurellales</taxon>
        <taxon>Pasteurellaceae</taxon>
        <taxon>Haemophilus</taxon>
    </lineage>
</organism>
<reference key="1">
    <citation type="submission" date="2003-06" db="EMBL/GenBank/DDBJ databases">
        <title>The complete genome sequence of Haemophilus ducreyi.</title>
        <authorList>
            <person name="Munson R.S. Jr."/>
            <person name="Ray W.C."/>
            <person name="Mahairas G."/>
            <person name="Sabo P."/>
            <person name="Mungur R."/>
            <person name="Johnson L."/>
            <person name="Nguyen D."/>
            <person name="Wang J."/>
            <person name="Forst C."/>
            <person name="Hood L."/>
        </authorList>
    </citation>
    <scope>NUCLEOTIDE SEQUENCE [LARGE SCALE GENOMIC DNA]</scope>
    <source>
        <strain>35000HP / ATCC 700724</strain>
    </source>
</reference>
<feature type="chain" id="PRO_0000126891" description="Phenylalanine--tRNA ligase beta subunit">
    <location>
        <begin position="1"/>
        <end position="795"/>
    </location>
</feature>
<feature type="domain" description="tRNA-binding" evidence="1">
    <location>
        <begin position="39"/>
        <end position="149"/>
    </location>
</feature>
<feature type="domain" description="B5" evidence="1">
    <location>
        <begin position="402"/>
        <end position="477"/>
    </location>
</feature>
<feature type="domain" description="FDX-ACB" evidence="1">
    <location>
        <begin position="701"/>
        <end position="794"/>
    </location>
</feature>
<feature type="binding site" evidence="1">
    <location>
        <position position="455"/>
    </location>
    <ligand>
        <name>Mg(2+)</name>
        <dbReference type="ChEBI" id="CHEBI:18420"/>
        <note>shared with alpha subunit</note>
    </ligand>
</feature>
<feature type="binding site" evidence="1">
    <location>
        <position position="461"/>
    </location>
    <ligand>
        <name>Mg(2+)</name>
        <dbReference type="ChEBI" id="CHEBI:18420"/>
        <note>shared with alpha subunit</note>
    </ligand>
</feature>
<feature type="binding site" evidence="1">
    <location>
        <position position="464"/>
    </location>
    <ligand>
        <name>Mg(2+)</name>
        <dbReference type="ChEBI" id="CHEBI:18420"/>
        <note>shared with alpha subunit</note>
    </ligand>
</feature>
<feature type="binding site" evidence="1">
    <location>
        <position position="465"/>
    </location>
    <ligand>
        <name>Mg(2+)</name>
        <dbReference type="ChEBI" id="CHEBI:18420"/>
        <note>shared with alpha subunit</note>
    </ligand>
</feature>
<gene>
    <name evidence="1" type="primary">pheT</name>
    <name type="ordered locus">HD_1483</name>
</gene>
<sequence length="795" mass="87384">MKFNESWLREWVDPKVSTAQLCDQITMLGLEVDSVEPISGEFSGVVVAEVVECTQHPDADKLRVTKVNVGAERLLSIVCGAANCRQGLKVACAIEGAILPGNFKIKKTKLRGQLSEGMLCSFSELGIKEDQSSGIIELPADAPIGVDIREYLNLNDVAIEVSLTPNRADCLSIAGIAREVAVINQMEVKSPVIKPVPATLSAPIEIDIQAPSACPHYLARIIKNVNVNATSPLWLQEKLRRCGILSIDPIVDITNLSLLELGQPMHAFDAEKVKAPIQVRLAKDQEQLVLLDGTTAKLQTNTLVIADQKNVLALAGIMGGEASKVNAETKDIILEAAFFAPLALTGRTRQYGLHTDASHRFERGVDPTLARQAMERATTLIIEICGGEVAEVCEAINTEYLPKQPIIRLRRTKLDSVIGHYIEDRLVTDILVRLGLNVTCENDGWIATVPSWRFDLEIEEDLIEEIARIYGYNRIPNNALLAHLTLKGSAEKVLEPNRIKTVLVDNDYQEVVTYSFVDPKIQQLLHPQQEALILPNPISSEMSAMRVSLLTGLLQTVLYNQNRQQNRIRIFEQGLRFIPDASAESAVRQEAVFAAVIVGEKHIANWEGKSKAVDFFDLKGDLEQILALTANKELTFVAKQFPALHPGQSAAIMLNEQEVGFIGTLHPSIGQKLGIKGTPIVFELLADVVSERAIPVAKEISKFPANNRDIAIVIDEHIPAREVLSACYHAGREQLTAVNLFDVYQGANLVVGKKSLAISLTIQNTEKTLTEEEISAVIQLVLDELAQRFQASLRD</sequence>